<reference key="1">
    <citation type="journal article" date="2004" name="Proc. Natl. Acad. Sci. U.S.A.">
        <title>Structural flexibility in the Burkholderia mallei genome.</title>
        <authorList>
            <person name="Nierman W.C."/>
            <person name="DeShazer D."/>
            <person name="Kim H.S."/>
            <person name="Tettelin H."/>
            <person name="Nelson K.E."/>
            <person name="Feldblyum T.V."/>
            <person name="Ulrich R.L."/>
            <person name="Ronning C.M."/>
            <person name="Brinkac L.M."/>
            <person name="Daugherty S.C."/>
            <person name="Davidsen T.D."/>
            <person name="DeBoy R.T."/>
            <person name="Dimitrov G."/>
            <person name="Dodson R.J."/>
            <person name="Durkin A.S."/>
            <person name="Gwinn M.L."/>
            <person name="Haft D.H."/>
            <person name="Khouri H.M."/>
            <person name="Kolonay J.F."/>
            <person name="Madupu R."/>
            <person name="Mohammoud Y."/>
            <person name="Nelson W.C."/>
            <person name="Radune D."/>
            <person name="Romero C.M."/>
            <person name="Sarria S."/>
            <person name="Selengut J."/>
            <person name="Shamblin C."/>
            <person name="Sullivan S.A."/>
            <person name="White O."/>
            <person name="Yu Y."/>
            <person name="Zafar N."/>
            <person name="Zhou L."/>
            <person name="Fraser C.M."/>
        </authorList>
    </citation>
    <scope>NUCLEOTIDE SEQUENCE [LARGE SCALE GENOMIC DNA]</scope>
    <source>
        <strain>ATCC 23344</strain>
    </source>
</reference>
<dbReference type="EC" id="6.1.1.5" evidence="1"/>
<dbReference type="EMBL" id="CP000011">
    <property type="protein sequence ID" value="AAU46160.1"/>
    <property type="molecule type" value="Genomic_DNA"/>
</dbReference>
<dbReference type="RefSeq" id="YP_105643.1">
    <property type="nucleotide sequence ID" value="NC_006349.2"/>
</dbReference>
<dbReference type="SMR" id="Q62CD5"/>
<dbReference type="KEGG" id="bma:BMAA0963"/>
<dbReference type="PATRIC" id="fig|243160.12.peg.4482"/>
<dbReference type="eggNOG" id="COG0060">
    <property type="taxonomic scope" value="Bacteria"/>
</dbReference>
<dbReference type="HOGENOM" id="CLU_001493_7_1_4"/>
<dbReference type="Proteomes" id="UP000006693">
    <property type="component" value="Chromosome 2"/>
</dbReference>
<dbReference type="GO" id="GO:0005829">
    <property type="term" value="C:cytosol"/>
    <property type="evidence" value="ECO:0007669"/>
    <property type="project" value="TreeGrafter"/>
</dbReference>
<dbReference type="GO" id="GO:0002161">
    <property type="term" value="F:aminoacyl-tRNA deacylase activity"/>
    <property type="evidence" value="ECO:0007669"/>
    <property type="project" value="InterPro"/>
</dbReference>
<dbReference type="GO" id="GO:0005524">
    <property type="term" value="F:ATP binding"/>
    <property type="evidence" value="ECO:0007669"/>
    <property type="project" value="UniProtKB-UniRule"/>
</dbReference>
<dbReference type="GO" id="GO:0004822">
    <property type="term" value="F:isoleucine-tRNA ligase activity"/>
    <property type="evidence" value="ECO:0007669"/>
    <property type="project" value="UniProtKB-UniRule"/>
</dbReference>
<dbReference type="GO" id="GO:0000049">
    <property type="term" value="F:tRNA binding"/>
    <property type="evidence" value="ECO:0007669"/>
    <property type="project" value="InterPro"/>
</dbReference>
<dbReference type="GO" id="GO:0008270">
    <property type="term" value="F:zinc ion binding"/>
    <property type="evidence" value="ECO:0007669"/>
    <property type="project" value="UniProtKB-UniRule"/>
</dbReference>
<dbReference type="GO" id="GO:0006428">
    <property type="term" value="P:isoleucyl-tRNA aminoacylation"/>
    <property type="evidence" value="ECO:0007669"/>
    <property type="project" value="UniProtKB-UniRule"/>
</dbReference>
<dbReference type="CDD" id="cd07960">
    <property type="entry name" value="Anticodon_Ia_Ile_BEm"/>
    <property type="match status" value="1"/>
</dbReference>
<dbReference type="FunFam" id="3.40.50.620:FF:000042">
    <property type="entry name" value="Isoleucine--tRNA ligase"/>
    <property type="match status" value="1"/>
</dbReference>
<dbReference type="Gene3D" id="1.10.730.20">
    <property type="match status" value="1"/>
</dbReference>
<dbReference type="Gene3D" id="3.40.50.620">
    <property type="entry name" value="HUPs"/>
    <property type="match status" value="2"/>
</dbReference>
<dbReference type="Gene3D" id="3.90.740.10">
    <property type="entry name" value="Valyl/Leucyl/Isoleucyl-tRNA synthetase, editing domain"/>
    <property type="match status" value="1"/>
</dbReference>
<dbReference type="HAMAP" id="MF_02002">
    <property type="entry name" value="Ile_tRNA_synth_type1"/>
    <property type="match status" value="1"/>
</dbReference>
<dbReference type="InterPro" id="IPR001412">
    <property type="entry name" value="aa-tRNA-synth_I_CS"/>
</dbReference>
<dbReference type="InterPro" id="IPR002300">
    <property type="entry name" value="aa-tRNA-synth_Ia"/>
</dbReference>
<dbReference type="InterPro" id="IPR033708">
    <property type="entry name" value="Anticodon_Ile_BEm"/>
</dbReference>
<dbReference type="InterPro" id="IPR002301">
    <property type="entry name" value="Ile-tRNA-ligase"/>
</dbReference>
<dbReference type="InterPro" id="IPR023585">
    <property type="entry name" value="Ile-tRNA-ligase_type1"/>
</dbReference>
<dbReference type="InterPro" id="IPR050081">
    <property type="entry name" value="Ile-tRNA_ligase"/>
</dbReference>
<dbReference type="InterPro" id="IPR013155">
    <property type="entry name" value="M/V/L/I-tRNA-synth_anticd-bd"/>
</dbReference>
<dbReference type="InterPro" id="IPR014729">
    <property type="entry name" value="Rossmann-like_a/b/a_fold"/>
</dbReference>
<dbReference type="InterPro" id="IPR009080">
    <property type="entry name" value="tRNAsynth_Ia_anticodon-bd"/>
</dbReference>
<dbReference type="InterPro" id="IPR009008">
    <property type="entry name" value="Val/Leu/Ile-tRNA-synth_edit"/>
</dbReference>
<dbReference type="InterPro" id="IPR010663">
    <property type="entry name" value="Znf_FPG/IleRS"/>
</dbReference>
<dbReference type="NCBIfam" id="TIGR00392">
    <property type="entry name" value="ileS"/>
    <property type="match status" value="1"/>
</dbReference>
<dbReference type="PANTHER" id="PTHR42765:SF1">
    <property type="entry name" value="ISOLEUCINE--TRNA LIGASE, MITOCHONDRIAL"/>
    <property type="match status" value="1"/>
</dbReference>
<dbReference type="PANTHER" id="PTHR42765">
    <property type="entry name" value="SOLEUCYL-TRNA SYNTHETASE"/>
    <property type="match status" value="1"/>
</dbReference>
<dbReference type="Pfam" id="PF08264">
    <property type="entry name" value="Anticodon_1"/>
    <property type="match status" value="1"/>
</dbReference>
<dbReference type="Pfam" id="PF00133">
    <property type="entry name" value="tRNA-synt_1"/>
    <property type="match status" value="2"/>
</dbReference>
<dbReference type="Pfam" id="PF06827">
    <property type="entry name" value="zf-FPG_IleRS"/>
    <property type="match status" value="1"/>
</dbReference>
<dbReference type="PRINTS" id="PR00984">
    <property type="entry name" value="TRNASYNTHILE"/>
</dbReference>
<dbReference type="SUPFAM" id="SSF47323">
    <property type="entry name" value="Anticodon-binding domain of a subclass of class I aminoacyl-tRNA synthetases"/>
    <property type="match status" value="1"/>
</dbReference>
<dbReference type="SUPFAM" id="SSF52374">
    <property type="entry name" value="Nucleotidylyl transferase"/>
    <property type="match status" value="1"/>
</dbReference>
<dbReference type="SUPFAM" id="SSF50677">
    <property type="entry name" value="ValRS/IleRS/LeuRS editing domain"/>
    <property type="match status" value="1"/>
</dbReference>
<dbReference type="PROSITE" id="PS00178">
    <property type="entry name" value="AA_TRNA_LIGASE_I"/>
    <property type="match status" value="1"/>
</dbReference>
<comment type="function">
    <text evidence="1">Catalyzes the attachment of isoleucine to tRNA(Ile). As IleRS can inadvertently accommodate and process structurally similar amino acids such as valine, to avoid such errors it has two additional distinct tRNA(Ile)-dependent editing activities. One activity is designated as 'pretransfer' editing and involves the hydrolysis of activated Val-AMP. The other activity is designated 'posttransfer' editing and involves deacylation of mischarged Val-tRNA(Ile).</text>
</comment>
<comment type="catalytic activity">
    <reaction evidence="1">
        <text>tRNA(Ile) + L-isoleucine + ATP = L-isoleucyl-tRNA(Ile) + AMP + diphosphate</text>
        <dbReference type="Rhea" id="RHEA:11060"/>
        <dbReference type="Rhea" id="RHEA-COMP:9666"/>
        <dbReference type="Rhea" id="RHEA-COMP:9695"/>
        <dbReference type="ChEBI" id="CHEBI:30616"/>
        <dbReference type="ChEBI" id="CHEBI:33019"/>
        <dbReference type="ChEBI" id="CHEBI:58045"/>
        <dbReference type="ChEBI" id="CHEBI:78442"/>
        <dbReference type="ChEBI" id="CHEBI:78528"/>
        <dbReference type="ChEBI" id="CHEBI:456215"/>
        <dbReference type="EC" id="6.1.1.5"/>
    </reaction>
</comment>
<comment type="cofactor">
    <cofactor evidence="1">
        <name>Zn(2+)</name>
        <dbReference type="ChEBI" id="CHEBI:29105"/>
    </cofactor>
    <text evidence="1">Binds 1 zinc ion per subunit.</text>
</comment>
<comment type="subunit">
    <text evidence="1">Monomer.</text>
</comment>
<comment type="subcellular location">
    <subcellularLocation>
        <location evidence="1">Cytoplasm</location>
    </subcellularLocation>
</comment>
<comment type="domain">
    <text evidence="1">IleRS has two distinct active sites: one for aminoacylation and one for editing. The misactivated valine is translocated from the active site to the editing site, which sterically excludes the correctly activated isoleucine. The single editing site contains two valyl binding pockets, one specific for each substrate (Val-AMP or Val-tRNA(Ile)).</text>
</comment>
<comment type="similarity">
    <text evidence="1">Belongs to the class-I aminoacyl-tRNA synthetase family. IleS type 1 subfamily.</text>
</comment>
<accession>Q62CD5</accession>
<organism>
    <name type="scientific">Burkholderia mallei (strain ATCC 23344)</name>
    <dbReference type="NCBI Taxonomy" id="243160"/>
    <lineage>
        <taxon>Bacteria</taxon>
        <taxon>Pseudomonadati</taxon>
        <taxon>Pseudomonadota</taxon>
        <taxon>Betaproteobacteria</taxon>
        <taxon>Burkholderiales</taxon>
        <taxon>Burkholderiaceae</taxon>
        <taxon>Burkholderia</taxon>
        <taxon>pseudomallei group</taxon>
    </lineage>
</organism>
<proteinExistence type="inferred from homology"/>
<name>SYI2_BURMA</name>
<gene>
    <name evidence="1" type="primary">ileS2</name>
    <name type="synonym">ileS-2</name>
    <name type="ordered locus">BMAA0963</name>
</gene>
<protein>
    <recommendedName>
        <fullName evidence="1">Isoleucine--tRNA ligase 2</fullName>
        <ecNumber evidence="1">6.1.1.5</ecNumber>
    </recommendedName>
    <alternativeName>
        <fullName evidence="1">Isoleucyl-tRNA synthetase 2</fullName>
        <shortName evidence="1">IleRS 2</shortName>
    </alternativeName>
</protein>
<evidence type="ECO:0000255" key="1">
    <source>
        <dbReference type="HAMAP-Rule" id="MF_02002"/>
    </source>
</evidence>
<evidence type="ECO:0000256" key="2">
    <source>
        <dbReference type="SAM" id="MobiDB-lite"/>
    </source>
</evidence>
<sequence length="967" mass="106372">MSEYKETLNLLQTPFPMKGDLPRREPALVERWAAQRVYARMRAAAAGRPPFVLHDGPPYANGDIHIGHAVNKVLKDIVLKSRFAAGYDAQWIPGWDCHGMPIEHRIEQLHGRGLPPAAVQRLCREYAFEQTERQRRDFLRLGLLGDWPHAFRTMDFRTEANELRFLERIRARGLLYRGQKPVNWCVDCQSALAEAELEYARKTSVAIHAGLRVRDPVDFASRFRRRPVLDKPAMLVVWTTTPWTIPGNAAAGVRADAPYGLYDTPGALIVVAQPLADALFASLGVDHALCALARGRELVGLALGQPFFAGRDVPVVEAEFVTLDAGTGIVHLAPAHGAEDAELCRRLGIAGENVVDGAGRFAADLPEIGGLPLADGIARIVAKLRADGTLVREAAFEHAYPHCWRHKTPILFRSTPQWFIGMDIECEQGEADPGRAAVTEEAGATGEARKVGKAEEAEEAGPAKTLRASARDAIADVPFYPPSARQRMEAMIDGRPDWCVSRQRTWGVPLPYFVRRDDRSLHPRSARLVEAVAARVERDGIAAWSRLRPAELGVDENAYEKLSDTLDVWFDSGSIHATVYRDAARADTGGYPADLYLEGADQHRGWFGASLMTGCAADGRAPFRAILTHGFVVDGAGRKMSKSLGNTVSPQRIADTRGADILRLWIASTDYAAEMSISDEILERVVETYRRMRNTLRFLLQNVADFDPRDDAVPAGQLLDVDRYALARCREFVDACRSAYARYDFVAVTRLAHGYCAEELGGFYLDALKDRLYASVADGVERRAAQTALHSVLANLLISIAPILSFTAEEAWTVFAGDERDSVFLHTWDEHAPPPDDAALARWAHVRALRPHVTKALEEARGAALIGRSSEAELVVRAPRDVLDALAPLHGELAAVFIVAGVTLETADQIAVAVARTPLARCERCWRHEPSVAAHASGDALCARCRHALSRRARAERSEPRAAVGSR</sequence>
<keyword id="KW-0030">Aminoacyl-tRNA synthetase</keyword>
<keyword id="KW-0067">ATP-binding</keyword>
<keyword id="KW-0963">Cytoplasm</keyword>
<keyword id="KW-0436">Ligase</keyword>
<keyword id="KW-0479">Metal-binding</keyword>
<keyword id="KW-0547">Nucleotide-binding</keyword>
<keyword id="KW-0648">Protein biosynthesis</keyword>
<keyword id="KW-1185">Reference proteome</keyword>
<keyword id="KW-0862">Zinc</keyword>
<feature type="chain" id="PRO_0000098369" description="Isoleucine--tRNA ligase 2">
    <location>
        <begin position="1"/>
        <end position="967"/>
    </location>
</feature>
<feature type="region of interest" description="Disordered" evidence="2">
    <location>
        <begin position="437"/>
        <end position="466"/>
    </location>
</feature>
<feature type="short sequence motif" description="'HIGH' region">
    <location>
        <begin position="58"/>
        <end position="68"/>
    </location>
</feature>
<feature type="short sequence motif" description="'KMSKS' region">
    <location>
        <begin position="639"/>
        <end position="643"/>
    </location>
</feature>
<feature type="compositionally biased region" description="Low complexity" evidence="2">
    <location>
        <begin position="437"/>
        <end position="446"/>
    </location>
</feature>
<feature type="binding site" evidence="1">
    <location>
        <position position="598"/>
    </location>
    <ligand>
        <name>L-isoleucyl-5'-AMP</name>
        <dbReference type="ChEBI" id="CHEBI:178002"/>
    </ligand>
</feature>
<feature type="binding site" evidence="1">
    <location>
        <position position="642"/>
    </location>
    <ligand>
        <name>ATP</name>
        <dbReference type="ChEBI" id="CHEBI:30616"/>
    </ligand>
</feature>
<feature type="binding site" evidence="1">
    <location>
        <position position="922"/>
    </location>
    <ligand>
        <name>Zn(2+)</name>
        <dbReference type="ChEBI" id="CHEBI:29105"/>
    </ligand>
</feature>
<feature type="binding site" evidence="1">
    <location>
        <position position="925"/>
    </location>
    <ligand>
        <name>Zn(2+)</name>
        <dbReference type="ChEBI" id="CHEBI:29105"/>
    </ligand>
</feature>
<feature type="binding site" evidence="1">
    <location>
        <position position="942"/>
    </location>
    <ligand>
        <name>Zn(2+)</name>
        <dbReference type="ChEBI" id="CHEBI:29105"/>
    </ligand>
</feature>
<feature type="binding site" evidence="1">
    <location>
        <position position="945"/>
    </location>
    <ligand>
        <name>Zn(2+)</name>
        <dbReference type="ChEBI" id="CHEBI:29105"/>
    </ligand>
</feature>